<comment type="subcellular location">
    <subcellularLocation>
        <location evidence="2">Membrane</location>
        <topology evidence="2">Multi-pass membrane protein</topology>
    </subcellularLocation>
</comment>
<comment type="miscellaneous">
    <text evidence="2">Partially overlaps SPT6.</text>
</comment>
<comment type="caution">
    <text evidence="3">Product of a dubious gene prediction unlikely to encode a functional protein. Because of that it is not part of the S.cerevisiae S288c complete/reference proteome set.</text>
</comment>
<dbReference type="EMBL" id="Z72899">
    <property type="protein sequence ID" value="CAA97122.1"/>
    <property type="molecule type" value="Genomic_DNA"/>
</dbReference>
<dbReference type="EMBL" id="AY558271">
    <property type="protein sequence ID" value="AAS56597.1"/>
    <property type="molecule type" value="Genomic_DNA"/>
</dbReference>
<dbReference type="PIR" id="S64422">
    <property type="entry name" value="S64422"/>
</dbReference>
<dbReference type="IntAct" id="P53268">
    <property type="interactions" value="1"/>
</dbReference>
<dbReference type="MINT" id="P53268"/>
<dbReference type="PaxDb" id="4932-YGR114C"/>
<dbReference type="EnsemblFungi" id="YGR114C_mRNA">
    <property type="protein sequence ID" value="YGR114C"/>
    <property type="gene ID" value="YGR114C"/>
</dbReference>
<dbReference type="AGR" id="SGD:S000003346"/>
<dbReference type="SGD" id="S000003346">
    <property type="gene designation" value="YGR114C"/>
</dbReference>
<dbReference type="HOGENOM" id="CLU_1950496_0_0_1"/>
<dbReference type="GO" id="GO:0016020">
    <property type="term" value="C:membrane"/>
    <property type="evidence" value="ECO:0007669"/>
    <property type="project" value="UniProtKB-SubCell"/>
</dbReference>
<gene>
    <name type="ordered locus">YGR114C</name>
    <name type="ORF">G6163</name>
</gene>
<protein>
    <recommendedName>
        <fullName>Putative uncharacterized protein YGR114C</fullName>
    </recommendedName>
</protein>
<sequence length="129" mass="15399">MFSSFFGNTCSWVFIFIIIVDNEAFLHFSCLIFVFINIFVFLRGVKDIFSFFFLTRRFSFIVVIYYFFLVPRDQLRISRLFHKRQILCKDSRQLMTCSLGLFFKAQINIFLPPFALTVVQFLVNLVCHT</sequence>
<proteinExistence type="uncertain"/>
<keyword id="KW-0472">Membrane</keyword>
<keyword id="KW-0812">Transmembrane</keyword>
<keyword id="KW-1133">Transmembrane helix</keyword>
<reference key="1">
    <citation type="journal article" date="1996" name="Yeast">
        <title>The sequence of a 23.4 kb segment on the right arm of chromosome VII from Saccharomyces cerevisiae reveals CLB6, SPT6, RP28A and NUP57 genes, a Ty3 element and 11 new open reading frames.</title>
        <authorList>
            <person name="Hansen M."/>
            <person name="Albers M."/>
            <person name="Backes U."/>
            <person name="Coblenz A."/>
            <person name="Leuther H."/>
            <person name="Neu R."/>
            <person name="Schreer A."/>
            <person name="Schaefer B."/>
            <person name="Zimmermann M."/>
            <person name="Wolf K."/>
        </authorList>
    </citation>
    <scope>NUCLEOTIDE SEQUENCE [GENOMIC DNA]</scope>
</reference>
<reference key="2">
    <citation type="journal article" date="1997" name="Nature">
        <title>The nucleotide sequence of Saccharomyces cerevisiae chromosome VII.</title>
        <authorList>
            <person name="Tettelin H."/>
            <person name="Agostoni-Carbone M.L."/>
            <person name="Albermann K."/>
            <person name="Albers M."/>
            <person name="Arroyo J."/>
            <person name="Backes U."/>
            <person name="Barreiros T."/>
            <person name="Bertani I."/>
            <person name="Bjourson A.J."/>
            <person name="Brueckner M."/>
            <person name="Bruschi C.V."/>
            <person name="Carignani G."/>
            <person name="Castagnoli L."/>
            <person name="Cerdan E."/>
            <person name="Clemente M.L."/>
            <person name="Coblenz A."/>
            <person name="Coglievina M."/>
            <person name="Coissac E."/>
            <person name="Defoor E."/>
            <person name="Del Bino S."/>
            <person name="Delius H."/>
            <person name="Delneri D."/>
            <person name="de Wergifosse P."/>
            <person name="Dujon B."/>
            <person name="Durand P."/>
            <person name="Entian K.-D."/>
            <person name="Eraso P."/>
            <person name="Escribano V."/>
            <person name="Fabiani L."/>
            <person name="Fartmann B."/>
            <person name="Feroli F."/>
            <person name="Feuermann M."/>
            <person name="Frontali L."/>
            <person name="Garcia-Gonzalez M."/>
            <person name="Garcia-Saez M.I."/>
            <person name="Goffeau A."/>
            <person name="Guerreiro P."/>
            <person name="Hani J."/>
            <person name="Hansen M."/>
            <person name="Hebling U."/>
            <person name="Hernandez K."/>
            <person name="Heumann K."/>
            <person name="Hilger F."/>
            <person name="Hofmann B."/>
            <person name="Indge K.J."/>
            <person name="James C.M."/>
            <person name="Klima R."/>
            <person name="Koetter P."/>
            <person name="Kramer B."/>
            <person name="Kramer W."/>
            <person name="Lauquin G."/>
            <person name="Leuther H."/>
            <person name="Louis E.J."/>
            <person name="Maillier E."/>
            <person name="Marconi A."/>
            <person name="Martegani E."/>
            <person name="Mazon M.J."/>
            <person name="Mazzoni C."/>
            <person name="McReynolds A.D.K."/>
            <person name="Melchioretto P."/>
            <person name="Mewes H.-W."/>
            <person name="Minenkova O."/>
            <person name="Mueller-Auer S."/>
            <person name="Nawrocki A."/>
            <person name="Netter P."/>
            <person name="Neu R."/>
            <person name="Nombela C."/>
            <person name="Oliver S.G."/>
            <person name="Panzeri L."/>
            <person name="Paoluzi S."/>
            <person name="Plevani P."/>
            <person name="Portetelle D."/>
            <person name="Portillo F."/>
            <person name="Potier S."/>
            <person name="Purnelle B."/>
            <person name="Rieger M."/>
            <person name="Riles L."/>
            <person name="Rinaldi T."/>
            <person name="Robben J."/>
            <person name="Rodrigues-Pousada C."/>
            <person name="Rodriguez-Belmonte E."/>
            <person name="Rodriguez-Torres A.M."/>
            <person name="Rose M."/>
            <person name="Ruzzi M."/>
            <person name="Saliola M."/>
            <person name="Sanchez-Perez M."/>
            <person name="Schaefer B."/>
            <person name="Schaefer M."/>
            <person name="Scharfe M."/>
            <person name="Schmidheini T."/>
            <person name="Schreer A."/>
            <person name="Skala J."/>
            <person name="Souciet J.-L."/>
            <person name="Steensma H.Y."/>
            <person name="Talla E."/>
            <person name="Thierry A."/>
            <person name="Vandenbol M."/>
            <person name="van der Aart Q.J.M."/>
            <person name="Van Dyck L."/>
            <person name="Vanoni M."/>
            <person name="Verhasselt P."/>
            <person name="Voet M."/>
            <person name="Volckaert G."/>
            <person name="Wambutt R."/>
            <person name="Watson M.D."/>
            <person name="Weber N."/>
            <person name="Wedler E."/>
            <person name="Wedler H."/>
            <person name="Wipfli P."/>
            <person name="Wolf K."/>
            <person name="Wright L.F."/>
            <person name="Zaccaria P."/>
            <person name="Zimmermann M."/>
            <person name="Zollner A."/>
            <person name="Kleine K."/>
        </authorList>
    </citation>
    <scope>NUCLEOTIDE SEQUENCE [LARGE SCALE GENOMIC DNA]</scope>
    <source>
        <strain>ATCC 204508 / S288c</strain>
    </source>
</reference>
<reference key="3">
    <citation type="journal article" date="2014" name="G3 (Bethesda)">
        <title>The reference genome sequence of Saccharomyces cerevisiae: Then and now.</title>
        <authorList>
            <person name="Engel S.R."/>
            <person name="Dietrich F.S."/>
            <person name="Fisk D.G."/>
            <person name="Binkley G."/>
            <person name="Balakrishnan R."/>
            <person name="Costanzo M.C."/>
            <person name="Dwight S.S."/>
            <person name="Hitz B.C."/>
            <person name="Karra K."/>
            <person name="Nash R.S."/>
            <person name="Weng S."/>
            <person name="Wong E.D."/>
            <person name="Lloyd P."/>
            <person name="Skrzypek M.S."/>
            <person name="Miyasato S.R."/>
            <person name="Simison M."/>
            <person name="Cherry J.M."/>
        </authorList>
    </citation>
    <scope>GENOME REANNOTATION</scope>
    <source>
        <strain>ATCC 204508 / S288c</strain>
    </source>
</reference>
<reference key="4">
    <citation type="journal article" date="2007" name="Genome Res.">
        <title>Approaching a complete repository of sequence-verified protein-encoding clones for Saccharomyces cerevisiae.</title>
        <authorList>
            <person name="Hu Y."/>
            <person name="Rolfs A."/>
            <person name="Bhullar B."/>
            <person name="Murthy T.V.S."/>
            <person name="Zhu C."/>
            <person name="Berger M.F."/>
            <person name="Camargo A.A."/>
            <person name="Kelley F."/>
            <person name="McCarron S."/>
            <person name="Jepson D."/>
            <person name="Richardson A."/>
            <person name="Raphael J."/>
            <person name="Moreira D."/>
            <person name="Taycher E."/>
            <person name="Zuo D."/>
            <person name="Mohr S."/>
            <person name="Kane M.F."/>
            <person name="Williamson J."/>
            <person name="Simpson A.J.G."/>
            <person name="Bulyk M.L."/>
            <person name="Harlow E."/>
            <person name="Marsischky G."/>
            <person name="Kolodner R.D."/>
            <person name="LaBaer J."/>
        </authorList>
    </citation>
    <scope>NUCLEOTIDE SEQUENCE [GENOMIC DNA]</scope>
    <source>
        <strain>ATCC 204508 / S288c</strain>
    </source>
</reference>
<organism>
    <name type="scientific">Saccharomyces cerevisiae (strain ATCC 204508 / S288c)</name>
    <name type="common">Baker's yeast</name>
    <dbReference type="NCBI Taxonomy" id="559292"/>
    <lineage>
        <taxon>Eukaryota</taxon>
        <taxon>Fungi</taxon>
        <taxon>Dikarya</taxon>
        <taxon>Ascomycota</taxon>
        <taxon>Saccharomycotina</taxon>
        <taxon>Saccharomycetes</taxon>
        <taxon>Saccharomycetales</taxon>
        <taxon>Saccharomycetaceae</taxon>
        <taxon>Saccharomyces</taxon>
    </lineage>
</organism>
<name>YG2Z_YEAST</name>
<accession>P53268</accession>
<feature type="chain" id="PRO_0000202815" description="Putative uncharacterized protein YGR114C">
    <location>
        <begin position="1"/>
        <end position="129"/>
    </location>
</feature>
<feature type="transmembrane region" description="Helical" evidence="1">
    <location>
        <begin position="15"/>
        <end position="35"/>
    </location>
</feature>
<feature type="transmembrane region" description="Helical" evidence="1">
    <location>
        <begin position="48"/>
        <end position="68"/>
    </location>
</feature>
<feature type="transmembrane region" description="Helical" evidence="1">
    <location>
        <begin position="107"/>
        <end position="127"/>
    </location>
</feature>
<evidence type="ECO:0000255" key="1"/>
<evidence type="ECO:0000305" key="2"/>
<evidence type="ECO:0000305" key="3">
    <source>
    </source>
</evidence>